<organism>
    <name type="scientific">Corynebacterium jeikeium (strain K411)</name>
    <dbReference type="NCBI Taxonomy" id="306537"/>
    <lineage>
        <taxon>Bacteria</taxon>
        <taxon>Bacillati</taxon>
        <taxon>Actinomycetota</taxon>
        <taxon>Actinomycetes</taxon>
        <taxon>Mycobacteriales</taxon>
        <taxon>Corynebacteriaceae</taxon>
        <taxon>Corynebacterium</taxon>
    </lineage>
</organism>
<dbReference type="EC" id="7.1.2.2" evidence="1"/>
<dbReference type="EMBL" id="CR931997">
    <property type="protein sequence ID" value="CAI37509.1"/>
    <property type="molecule type" value="Genomic_DNA"/>
</dbReference>
<dbReference type="RefSeq" id="WP_011273820.1">
    <property type="nucleotide sequence ID" value="NC_007164.1"/>
</dbReference>
<dbReference type="SMR" id="Q4JUJ8"/>
<dbReference type="STRING" id="306537.jk1337"/>
<dbReference type="GeneID" id="92738918"/>
<dbReference type="KEGG" id="cjk:jk1337"/>
<dbReference type="PATRIC" id="fig|306537.10.peg.1357"/>
<dbReference type="eggNOG" id="COG0056">
    <property type="taxonomic scope" value="Bacteria"/>
</dbReference>
<dbReference type="HOGENOM" id="CLU_010091_2_1_11"/>
<dbReference type="OrthoDB" id="9803053at2"/>
<dbReference type="Proteomes" id="UP000000545">
    <property type="component" value="Chromosome"/>
</dbReference>
<dbReference type="GO" id="GO:0005886">
    <property type="term" value="C:plasma membrane"/>
    <property type="evidence" value="ECO:0007669"/>
    <property type="project" value="UniProtKB-SubCell"/>
</dbReference>
<dbReference type="GO" id="GO:0045259">
    <property type="term" value="C:proton-transporting ATP synthase complex"/>
    <property type="evidence" value="ECO:0007669"/>
    <property type="project" value="UniProtKB-KW"/>
</dbReference>
<dbReference type="GO" id="GO:0043531">
    <property type="term" value="F:ADP binding"/>
    <property type="evidence" value="ECO:0007669"/>
    <property type="project" value="TreeGrafter"/>
</dbReference>
<dbReference type="GO" id="GO:0005524">
    <property type="term" value="F:ATP binding"/>
    <property type="evidence" value="ECO:0007669"/>
    <property type="project" value="UniProtKB-UniRule"/>
</dbReference>
<dbReference type="GO" id="GO:0046933">
    <property type="term" value="F:proton-transporting ATP synthase activity, rotational mechanism"/>
    <property type="evidence" value="ECO:0007669"/>
    <property type="project" value="UniProtKB-UniRule"/>
</dbReference>
<dbReference type="CDD" id="cd18113">
    <property type="entry name" value="ATP-synt_F1_alpha_C"/>
    <property type="match status" value="1"/>
</dbReference>
<dbReference type="CDD" id="cd18116">
    <property type="entry name" value="ATP-synt_F1_alpha_N"/>
    <property type="match status" value="1"/>
</dbReference>
<dbReference type="CDD" id="cd01132">
    <property type="entry name" value="F1-ATPase_alpha_CD"/>
    <property type="match status" value="1"/>
</dbReference>
<dbReference type="FunFam" id="1.20.150.20:FF:000001">
    <property type="entry name" value="ATP synthase subunit alpha"/>
    <property type="match status" value="1"/>
</dbReference>
<dbReference type="FunFam" id="3.40.50.300:FF:000002">
    <property type="entry name" value="ATP synthase subunit alpha"/>
    <property type="match status" value="1"/>
</dbReference>
<dbReference type="Gene3D" id="2.40.30.20">
    <property type="match status" value="1"/>
</dbReference>
<dbReference type="Gene3D" id="1.20.150.20">
    <property type="entry name" value="ATP synthase alpha/beta chain, C-terminal domain"/>
    <property type="match status" value="1"/>
</dbReference>
<dbReference type="Gene3D" id="3.40.50.300">
    <property type="entry name" value="P-loop containing nucleotide triphosphate hydrolases"/>
    <property type="match status" value="1"/>
</dbReference>
<dbReference type="HAMAP" id="MF_01346">
    <property type="entry name" value="ATP_synth_alpha_bact"/>
    <property type="match status" value="1"/>
</dbReference>
<dbReference type="InterPro" id="IPR023366">
    <property type="entry name" value="ATP_synth_asu-like_sf"/>
</dbReference>
<dbReference type="InterPro" id="IPR000793">
    <property type="entry name" value="ATP_synth_asu_C"/>
</dbReference>
<dbReference type="InterPro" id="IPR038376">
    <property type="entry name" value="ATP_synth_asu_C_sf"/>
</dbReference>
<dbReference type="InterPro" id="IPR033732">
    <property type="entry name" value="ATP_synth_F1_a_nt-bd_dom"/>
</dbReference>
<dbReference type="InterPro" id="IPR005294">
    <property type="entry name" value="ATP_synth_F1_asu"/>
</dbReference>
<dbReference type="InterPro" id="IPR020003">
    <property type="entry name" value="ATPase_a/bsu_AS"/>
</dbReference>
<dbReference type="InterPro" id="IPR004100">
    <property type="entry name" value="ATPase_F1/V1/A1_a/bsu_N"/>
</dbReference>
<dbReference type="InterPro" id="IPR036121">
    <property type="entry name" value="ATPase_F1/V1/A1_a/bsu_N_sf"/>
</dbReference>
<dbReference type="InterPro" id="IPR000194">
    <property type="entry name" value="ATPase_F1/V1/A1_a/bsu_nucl-bd"/>
</dbReference>
<dbReference type="InterPro" id="IPR027417">
    <property type="entry name" value="P-loop_NTPase"/>
</dbReference>
<dbReference type="NCBIfam" id="TIGR00962">
    <property type="entry name" value="atpA"/>
    <property type="match status" value="1"/>
</dbReference>
<dbReference type="NCBIfam" id="NF009884">
    <property type="entry name" value="PRK13343.1"/>
    <property type="match status" value="1"/>
</dbReference>
<dbReference type="PANTHER" id="PTHR48082">
    <property type="entry name" value="ATP SYNTHASE SUBUNIT ALPHA, MITOCHONDRIAL"/>
    <property type="match status" value="1"/>
</dbReference>
<dbReference type="PANTHER" id="PTHR48082:SF2">
    <property type="entry name" value="ATP SYNTHASE SUBUNIT ALPHA, MITOCHONDRIAL"/>
    <property type="match status" value="1"/>
</dbReference>
<dbReference type="Pfam" id="PF00006">
    <property type="entry name" value="ATP-synt_ab"/>
    <property type="match status" value="1"/>
</dbReference>
<dbReference type="Pfam" id="PF00306">
    <property type="entry name" value="ATP-synt_ab_C"/>
    <property type="match status" value="1"/>
</dbReference>
<dbReference type="Pfam" id="PF02874">
    <property type="entry name" value="ATP-synt_ab_N"/>
    <property type="match status" value="1"/>
</dbReference>
<dbReference type="SUPFAM" id="SSF47917">
    <property type="entry name" value="C-terminal domain of alpha and beta subunits of F1 ATP synthase"/>
    <property type="match status" value="1"/>
</dbReference>
<dbReference type="SUPFAM" id="SSF50615">
    <property type="entry name" value="N-terminal domain of alpha and beta subunits of F1 ATP synthase"/>
    <property type="match status" value="1"/>
</dbReference>
<dbReference type="SUPFAM" id="SSF52540">
    <property type="entry name" value="P-loop containing nucleoside triphosphate hydrolases"/>
    <property type="match status" value="1"/>
</dbReference>
<dbReference type="PROSITE" id="PS00152">
    <property type="entry name" value="ATPASE_ALPHA_BETA"/>
    <property type="match status" value="1"/>
</dbReference>
<accession>Q4JUJ8</accession>
<keyword id="KW-0066">ATP synthesis</keyword>
<keyword id="KW-0067">ATP-binding</keyword>
<keyword id="KW-1003">Cell membrane</keyword>
<keyword id="KW-0139">CF(1)</keyword>
<keyword id="KW-0375">Hydrogen ion transport</keyword>
<keyword id="KW-0406">Ion transport</keyword>
<keyword id="KW-0472">Membrane</keyword>
<keyword id="KW-0547">Nucleotide-binding</keyword>
<keyword id="KW-1185">Reference proteome</keyword>
<keyword id="KW-1278">Translocase</keyword>
<keyword id="KW-0813">Transport</keyword>
<comment type="function">
    <text evidence="1">Produces ATP from ADP in the presence of a proton gradient across the membrane. The alpha chain is a regulatory subunit.</text>
</comment>
<comment type="catalytic activity">
    <reaction evidence="1">
        <text>ATP + H2O + 4 H(+)(in) = ADP + phosphate + 5 H(+)(out)</text>
        <dbReference type="Rhea" id="RHEA:57720"/>
        <dbReference type="ChEBI" id="CHEBI:15377"/>
        <dbReference type="ChEBI" id="CHEBI:15378"/>
        <dbReference type="ChEBI" id="CHEBI:30616"/>
        <dbReference type="ChEBI" id="CHEBI:43474"/>
        <dbReference type="ChEBI" id="CHEBI:456216"/>
        <dbReference type="EC" id="7.1.2.2"/>
    </reaction>
</comment>
<comment type="subunit">
    <text evidence="1">F-type ATPases have 2 components, CF(1) - the catalytic core - and CF(0) - the membrane proton channel. CF(1) has five subunits: alpha(3), beta(3), gamma(1), delta(1), epsilon(1). CF(0) has three main subunits: a(1), b(2) and c(9-12). The alpha and beta chains form an alternating ring which encloses part of the gamma chain. CF(1) is attached to CF(0) by a central stalk formed by the gamma and epsilon chains, while a peripheral stalk is formed by the delta and b chains.</text>
</comment>
<comment type="subcellular location">
    <subcellularLocation>
        <location evidence="1">Cell membrane</location>
        <topology evidence="1">Peripheral membrane protein</topology>
    </subcellularLocation>
</comment>
<comment type="similarity">
    <text evidence="1">Belongs to the ATPase alpha/beta chains family.</text>
</comment>
<gene>
    <name evidence="1" type="primary">atpA</name>
    <name type="ordered locus">jk1337</name>
</gene>
<name>ATPA_CORJK</name>
<feature type="chain" id="PRO_0000238236" description="ATP synthase subunit alpha">
    <location>
        <begin position="1"/>
        <end position="545"/>
    </location>
</feature>
<feature type="region of interest" description="Disordered" evidence="2">
    <location>
        <begin position="511"/>
        <end position="545"/>
    </location>
</feature>
<feature type="compositionally biased region" description="Basic and acidic residues" evidence="2">
    <location>
        <begin position="523"/>
        <end position="534"/>
    </location>
</feature>
<feature type="compositionally biased region" description="Polar residues" evidence="2">
    <location>
        <begin position="535"/>
        <end position="545"/>
    </location>
</feature>
<feature type="binding site" evidence="1">
    <location>
        <begin position="172"/>
        <end position="179"/>
    </location>
    <ligand>
        <name>ATP</name>
        <dbReference type="ChEBI" id="CHEBI:30616"/>
    </ligand>
</feature>
<feature type="site" description="Required for activity" evidence="1">
    <location>
        <position position="373"/>
    </location>
</feature>
<reference key="1">
    <citation type="journal article" date="2005" name="J. Bacteriol.">
        <title>Complete genome sequence and analysis of the multiresistant nosocomial pathogen Corynebacterium jeikeium K411, a lipid-requiring bacterium of the human skin flora.</title>
        <authorList>
            <person name="Tauch A."/>
            <person name="Kaiser O."/>
            <person name="Hain T."/>
            <person name="Goesmann A."/>
            <person name="Weisshaar B."/>
            <person name="Albersmeier A."/>
            <person name="Bekel T."/>
            <person name="Bischoff N."/>
            <person name="Brune I."/>
            <person name="Chakraborty T."/>
            <person name="Kalinowski J."/>
            <person name="Meyer F."/>
            <person name="Rupp O."/>
            <person name="Schneiker S."/>
            <person name="Viehoever P."/>
            <person name="Puehler A."/>
        </authorList>
    </citation>
    <scope>NUCLEOTIDE SEQUENCE [LARGE SCALE GENOMIC DNA]</scope>
    <source>
        <strain>K411</strain>
    </source>
</reference>
<proteinExistence type="inferred from homology"/>
<sequence>MAELTISSDEIRSAIANYTSSYSPEASREEVGVVTAAADGIAQVSGMPSVMANELLEFPGGVIGVAQNLDTDSVGVVILGNFETLKEGDEVKRTGEVLSIPVGEKFLGRVINPLGQAIDGLGDIESEEERALELQAPSVLMRQPVEEPMQTGIKAIDAMTPIGRGQRQLIIGDRKTGKTSVCIDTILNQRDNWATGDPKQQVRCIYVAVGQKGSTIASIRKTLEDHGALEYTTIVAAPASDSAGFKWLAPFTGAALGQHWMYQGKHVLVIYDDLTKQAEAYRAISLLLRRPPGREAYPGDVFYLHSRLLERAAKLNDELGGGSLTALPIIETKANDVSAFIPTNVISITDGQVFLESDLFNQGVRPAINVGVSVSRVGGAAQTKGMKKVSGSLRLDLAAYRDLEAFAAFASDLDPASKAQLERGKRLVELLKQKETEPQSVEDQMVSIYLAGEGEFDDVPVEDVRRFESELLENLHATHGGVFEQIKGGTPFSDESKAELAGAVQDFKQGFQTTDGTPVINEPEARPLGDDEVTKSQITVSRKTQ</sequence>
<protein>
    <recommendedName>
        <fullName evidence="1">ATP synthase subunit alpha</fullName>
        <ecNumber evidence="1">7.1.2.2</ecNumber>
    </recommendedName>
    <alternativeName>
        <fullName evidence="1">ATP synthase F1 sector subunit alpha</fullName>
    </alternativeName>
    <alternativeName>
        <fullName evidence="1">F-ATPase subunit alpha</fullName>
    </alternativeName>
</protein>
<evidence type="ECO:0000255" key="1">
    <source>
        <dbReference type="HAMAP-Rule" id="MF_01346"/>
    </source>
</evidence>
<evidence type="ECO:0000256" key="2">
    <source>
        <dbReference type="SAM" id="MobiDB-lite"/>
    </source>
</evidence>